<accession>B0BW84</accession>
<sequence>MESFEKLEKLLSYSFKNKELLIEALSHPSLRQHHEYKDDKDYERLEFLGDAVLNLVITEILFRNFANYNEGNLAKIRSYLVCKETICMVGAKLTLKNYIIMTHGEEVAGGRDNLNNIENATEALIAAIYLDSNIETTHDIIEKLWAEFIKVQNLTDYDPKTALQEWAQASDHHLPIYRLIKREGASHSSTFTVLVKVKDYEQTGTGHAIKEAEKNAARSLLHRLKND</sequence>
<name>RNC_RICRO</name>
<gene>
    <name evidence="1" type="primary">rnc</name>
    <name type="ordered locus">RrIowa_0197</name>
</gene>
<evidence type="ECO:0000255" key="1">
    <source>
        <dbReference type="HAMAP-Rule" id="MF_00104"/>
    </source>
</evidence>
<comment type="function">
    <text evidence="1">Digests double-stranded RNA. Involved in the processing of primary rRNA transcript to yield the immediate precursors to the large and small rRNAs (23S and 16S). Processes some mRNAs, and tRNAs when they are encoded in the rRNA operon. Processes pre-crRNA and tracrRNA of type II CRISPR loci if present in the organism.</text>
</comment>
<comment type="catalytic activity">
    <reaction evidence="1">
        <text>Endonucleolytic cleavage to 5'-phosphomonoester.</text>
        <dbReference type="EC" id="3.1.26.3"/>
    </reaction>
</comment>
<comment type="cofactor">
    <cofactor evidence="1">
        <name>Mg(2+)</name>
        <dbReference type="ChEBI" id="CHEBI:18420"/>
    </cofactor>
</comment>
<comment type="subunit">
    <text evidence="1">Homodimer.</text>
</comment>
<comment type="subcellular location">
    <subcellularLocation>
        <location evidence="1">Cytoplasm</location>
    </subcellularLocation>
</comment>
<comment type="similarity">
    <text evidence="1">Belongs to the ribonuclease III family.</text>
</comment>
<protein>
    <recommendedName>
        <fullName evidence="1">Ribonuclease 3</fullName>
        <ecNumber evidence="1">3.1.26.3</ecNumber>
    </recommendedName>
    <alternativeName>
        <fullName evidence="1">Ribonuclease III</fullName>
        <shortName evidence="1">RNase III</shortName>
    </alternativeName>
</protein>
<feature type="chain" id="PRO_1000075804" description="Ribonuclease 3">
    <location>
        <begin position="1"/>
        <end position="227"/>
    </location>
</feature>
<feature type="domain" description="RNase III" evidence="1">
    <location>
        <begin position="4"/>
        <end position="133"/>
    </location>
</feature>
<feature type="domain" description="DRBM" evidence="1">
    <location>
        <begin position="158"/>
        <end position="226"/>
    </location>
</feature>
<feature type="active site" evidence="1">
    <location>
        <position position="50"/>
    </location>
</feature>
<feature type="active site" evidence="1">
    <location>
        <position position="122"/>
    </location>
</feature>
<feature type="binding site" evidence="1">
    <location>
        <position position="46"/>
    </location>
    <ligand>
        <name>Mg(2+)</name>
        <dbReference type="ChEBI" id="CHEBI:18420"/>
    </ligand>
</feature>
<feature type="binding site" evidence="1">
    <location>
        <position position="119"/>
    </location>
    <ligand>
        <name>Mg(2+)</name>
        <dbReference type="ChEBI" id="CHEBI:18420"/>
    </ligand>
</feature>
<feature type="binding site" evidence="1">
    <location>
        <position position="122"/>
    </location>
    <ligand>
        <name>Mg(2+)</name>
        <dbReference type="ChEBI" id="CHEBI:18420"/>
    </ligand>
</feature>
<organism>
    <name type="scientific">Rickettsia rickettsii (strain Iowa)</name>
    <dbReference type="NCBI Taxonomy" id="452659"/>
    <lineage>
        <taxon>Bacteria</taxon>
        <taxon>Pseudomonadati</taxon>
        <taxon>Pseudomonadota</taxon>
        <taxon>Alphaproteobacteria</taxon>
        <taxon>Rickettsiales</taxon>
        <taxon>Rickettsiaceae</taxon>
        <taxon>Rickettsieae</taxon>
        <taxon>Rickettsia</taxon>
        <taxon>spotted fever group</taxon>
    </lineage>
</organism>
<proteinExistence type="inferred from homology"/>
<dbReference type="EC" id="3.1.26.3" evidence="1"/>
<dbReference type="EMBL" id="CP000766">
    <property type="protein sequence ID" value="ABY72110.1"/>
    <property type="molecule type" value="Genomic_DNA"/>
</dbReference>
<dbReference type="RefSeq" id="WP_004996667.1">
    <property type="nucleotide sequence ID" value="NC_010263.3"/>
</dbReference>
<dbReference type="SMR" id="B0BW84"/>
<dbReference type="GeneID" id="95361874"/>
<dbReference type="KEGG" id="rrj:RrIowa_0197"/>
<dbReference type="eggNOG" id="COG0571">
    <property type="taxonomic scope" value="Bacteria"/>
</dbReference>
<dbReference type="HOGENOM" id="CLU_000907_1_1_5"/>
<dbReference type="Proteomes" id="UP000000796">
    <property type="component" value="Chromosome"/>
</dbReference>
<dbReference type="GO" id="GO:0005737">
    <property type="term" value="C:cytoplasm"/>
    <property type="evidence" value="ECO:0007669"/>
    <property type="project" value="UniProtKB-SubCell"/>
</dbReference>
<dbReference type="GO" id="GO:0003725">
    <property type="term" value="F:double-stranded RNA binding"/>
    <property type="evidence" value="ECO:0007669"/>
    <property type="project" value="TreeGrafter"/>
</dbReference>
<dbReference type="GO" id="GO:0046872">
    <property type="term" value="F:metal ion binding"/>
    <property type="evidence" value="ECO:0007669"/>
    <property type="project" value="UniProtKB-KW"/>
</dbReference>
<dbReference type="GO" id="GO:0004525">
    <property type="term" value="F:ribonuclease III activity"/>
    <property type="evidence" value="ECO:0007669"/>
    <property type="project" value="UniProtKB-UniRule"/>
</dbReference>
<dbReference type="GO" id="GO:0019843">
    <property type="term" value="F:rRNA binding"/>
    <property type="evidence" value="ECO:0007669"/>
    <property type="project" value="UniProtKB-KW"/>
</dbReference>
<dbReference type="GO" id="GO:0006397">
    <property type="term" value="P:mRNA processing"/>
    <property type="evidence" value="ECO:0007669"/>
    <property type="project" value="UniProtKB-UniRule"/>
</dbReference>
<dbReference type="GO" id="GO:0010468">
    <property type="term" value="P:regulation of gene expression"/>
    <property type="evidence" value="ECO:0007669"/>
    <property type="project" value="TreeGrafter"/>
</dbReference>
<dbReference type="GO" id="GO:0006364">
    <property type="term" value="P:rRNA processing"/>
    <property type="evidence" value="ECO:0007669"/>
    <property type="project" value="UniProtKB-UniRule"/>
</dbReference>
<dbReference type="GO" id="GO:0008033">
    <property type="term" value="P:tRNA processing"/>
    <property type="evidence" value="ECO:0007669"/>
    <property type="project" value="UniProtKB-KW"/>
</dbReference>
<dbReference type="CDD" id="cd10845">
    <property type="entry name" value="DSRM_RNAse_III_family"/>
    <property type="match status" value="1"/>
</dbReference>
<dbReference type="CDD" id="cd00593">
    <property type="entry name" value="RIBOc"/>
    <property type="match status" value="1"/>
</dbReference>
<dbReference type="FunFam" id="1.10.1520.10:FF:000001">
    <property type="entry name" value="Ribonuclease 3"/>
    <property type="match status" value="1"/>
</dbReference>
<dbReference type="Gene3D" id="3.30.160.20">
    <property type="match status" value="1"/>
</dbReference>
<dbReference type="Gene3D" id="1.10.1520.10">
    <property type="entry name" value="Ribonuclease III domain"/>
    <property type="match status" value="1"/>
</dbReference>
<dbReference type="HAMAP" id="MF_00104">
    <property type="entry name" value="RNase_III"/>
    <property type="match status" value="1"/>
</dbReference>
<dbReference type="InterPro" id="IPR014720">
    <property type="entry name" value="dsRBD_dom"/>
</dbReference>
<dbReference type="InterPro" id="IPR011907">
    <property type="entry name" value="RNase_III"/>
</dbReference>
<dbReference type="InterPro" id="IPR000999">
    <property type="entry name" value="RNase_III_dom"/>
</dbReference>
<dbReference type="InterPro" id="IPR036389">
    <property type="entry name" value="RNase_III_sf"/>
</dbReference>
<dbReference type="NCBIfam" id="TIGR02191">
    <property type="entry name" value="RNaseIII"/>
    <property type="match status" value="1"/>
</dbReference>
<dbReference type="PANTHER" id="PTHR11207:SF0">
    <property type="entry name" value="RIBONUCLEASE 3"/>
    <property type="match status" value="1"/>
</dbReference>
<dbReference type="PANTHER" id="PTHR11207">
    <property type="entry name" value="RIBONUCLEASE III"/>
    <property type="match status" value="1"/>
</dbReference>
<dbReference type="Pfam" id="PF00035">
    <property type="entry name" value="dsrm"/>
    <property type="match status" value="1"/>
</dbReference>
<dbReference type="Pfam" id="PF14622">
    <property type="entry name" value="Ribonucleas_3_3"/>
    <property type="match status" value="1"/>
</dbReference>
<dbReference type="SMART" id="SM00358">
    <property type="entry name" value="DSRM"/>
    <property type="match status" value="1"/>
</dbReference>
<dbReference type="SMART" id="SM00535">
    <property type="entry name" value="RIBOc"/>
    <property type="match status" value="1"/>
</dbReference>
<dbReference type="SUPFAM" id="SSF54768">
    <property type="entry name" value="dsRNA-binding domain-like"/>
    <property type="match status" value="1"/>
</dbReference>
<dbReference type="SUPFAM" id="SSF69065">
    <property type="entry name" value="RNase III domain-like"/>
    <property type="match status" value="1"/>
</dbReference>
<dbReference type="PROSITE" id="PS50137">
    <property type="entry name" value="DS_RBD"/>
    <property type="match status" value="1"/>
</dbReference>
<dbReference type="PROSITE" id="PS00517">
    <property type="entry name" value="RNASE_3_1"/>
    <property type="match status" value="1"/>
</dbReference>
<dbReference type="PROSITE" id="PS50142">
    <property type="entry name" value="RNASE_3_2"/>
    <property type="match status" value="1"/>
</dbReference>
<reference key="1">
    <citation type="journal article" date="2008" name="Infect. Immun.">
        <title>Genomic comparison of virulent Rickettsia rickettsii Sheila Smith and avirulent Rickettsia rickettsii Iowa.</title>
        <authorList>
            <person name="Ellison D.W."/>
            <person name="Clark T.R."/>
            <person name="Sturdevant D.E."/>
            <person name="Virtaneva K."/>
            <person name="Porcella S.F."/>
            <person name="Hackstadt T."/>
        </authorList>
    </citation>
    <scope>NUCLEOTIDE SEQUENCE [LARGE SCALE GENOMIC DNA]</scope>
    <source>
        <strain>Iowa</strain>
    </source>
</reference>
<keyword id="KW-0963">Cytoplasm</keyword>
<keyword id="KW-0255">Endonuclease</keyword>
<keyword id="KW-0378">Hydrolase</keyword>
<keyword id="KW-0460">Magnesium</keyword>
<keyword id="KW-0479">Metal-binding</keyword>
<keyword id="KW-0507">mRNA processing</keyword>
<keyword id="KW-0540">Nuclease</keyword>
<keyword id="KW-0694">RNA-binding</keyword>
<keyword id="KW-0698">rRNA processing</keyword>
<keyword id="KW-0699">rRNA-binding</keyword>
<keyword id="KW-0819">tRNA processing</keyword>